<name>YR638_MIMIV</name>
<sequence>MTDNNIMNLLNEDCILHILSFLADKDKIQLSLSCKSNLKFLHKTIYDDIYFYSKIKHLSYYHRFKYVVQDTMDDIDPQPSNIKWYILPAHYTNYAIGIRRQYNVYIKMDDTIVDENKIEKFIDKYTYDPYKYLD</sequence>
<feature type="chain" id="PRO_0000253218" description="Putative F-box protein R638">
    <location>
        <begin position="1"/>
        <end position="134"/>
    </location>
</feature>
<feature type="domain" description="F-box">
    <location>
        <begin position="5"/>
        <end position="52"/>
    </location>
</feature>
<accession>Q5UR83</accession>
<protein>
    <recommendedName>
        <fullName>Putative F-box protein R638</fullName>
    </recommendedName>
</protein>
<organism>
    <name type="scientific">Acanthamoeba polyphaga mimivirus</name>
    <name type="common">APMV</name>
    <dbReference type="NCBI Taxonomy" id="212035"/>
    <lineage>
        <taxon>Viruses</taxon>
        <taxon>Varidnaviria</taxon>
        <taxon>Bamfordvirae</taxon>
        <taxon>Nucleocytoviricota</taxon>
        <taxon>Megaviricetes</taxon>
        <taxon>Imitervirales</taxon>
        <taxon>Mimiviridae</taxon>
        <taxon>Megamimivirinae</taxon>
        <taxon>Mimivirus</taxon>
        <taxon>Mimivirus bradfordmassiliense</taxon>
    </lineage>
</organism>
<proteinExistence type="predicted"/>
<gene>
    <name type="ordered locus">MIMI_R638</name>
</gene>
<dbReference type="EMBL" id="AY653733">
    <property type="protein sequence ID" value="AAV50899.1"/>
    <property type="molecule type" value="Genomic_DNA"/>
</dbReference>
<dbReference type="SMR" id="Q5UR83"/>
<dbReference type="KEGG" id="vg:9925282"/>
<dbReference type="Proteomes" id="UP000001134">
    <property type="component" value="Genome"/>
</dbReference>
<dbReference type="CDD" id="cd09917">
    <property type="entry name" value="F-box_SF"/>
    <property type="match status" value="1"/>
</dbReference>
<dbReference type="InterPro" id="IPR036047">
    <property type="entry name" value="F-box-like_dom_sf"/>
</dbReference>
<dbReference type="SUPFAM" id="SSF81383">
    <property type="entry name" value="F-box domain"/>
    <property type="match status" value="1"/>
</dbReference>
<keyword id="KW-1185">Reference proteome</keyword>
<reference key="1">
    <citation type="journal article" date="2004" name="Science">
        <title>The 1.2-megabase genome sequence of Mimivirus.</title>
        <authorList>
            <person name="Raoult D."/>
            <person name="Audic S."/>
            <person name="Robert C."/>
            <person name="Abergel C."/>
            <person name="Renesto P."/>
            <person name="Ogata H."/>
            <person name="La Scola B."/>
            <person name="Susan M."/>
            <person name="Claverie J.-M."/>
        </authorList>
    </citation>
    <scope>NUCLEOTIDE SEQUENCE [LARGE SCALE GENOMIC DNA]</scope>
    <source>
        <strain>Rowbotham-Bradford</strain>
    </source>
</reference>
<organismHost>
    <name type="scientific">Acanthamoeba polyphaga</name>
    <name type="common">Amoeba</name>
    <dbReference type="NCBI Taxonomy" id="5757"/>
</organismHost>